<sequence>MTFQTLSSENNELLTIASESFLKRWAFSEQRLTVDLMTSDDDELTVYIETDLVQSSPIYLNEDLNICRLSIQDMHEILAVQHGYYVPPSRFGDLMKYSSECYSFFYGRKSDFKYLASFIGYEKYIACPIRFLEDISWRIR</sequence>
<gene>
    <name type="primary">rhsIC</name>
    <name type="ordered locus">Dda3937_00826</name>
</gene>
<reference key="1">
    <citation type="journal article" date="2011" name="J. Bacteriol.">
        <title>Genome sequence of the plant-pathogenic bacterium Dickeya dadantii 3937.</title>
        <authorList>
            <person name="Glasner J.D."/>
            <person name="Yang C.H."/>
            <person name="Reverchon S."/>
            <person name="Hugouvieux-Cotte-Pattat N."/>
            <person name="Condemine G."/>
            <person name="Bohin J.P."/>
            <person name="Van Gijsegem F."/>
            <person name="Yang S."/>
            <person name="Franza T."/>
            <person name="Expert D."/>
            <person name="Plunkett G. III"/>
            <person name="San Francisco M.J."/>
            <person name="Charkowski A.O."/>
            <person name="Py B."/>
            <person name="Bell K."/>
            <person name="Rauscher L."/>
            <person name="Rodriguez-Palenzuela P."/>
            <person name="Toussaint A."/>
            <person name="Holeva M.C."/>
            <person name="He S.Y."/>
            <person name="Douet V."/>
            <person name="Boccara M."/>
            <person name="Blanco C."/>
            <person name="Toth I."/>
            <person name="Anderson B.D."/>
            <person name="Biehl B.S."/>
            <person name="Mau B."/>
            <person name="Flynn S.M."/>
            <person name="Barras F."/>
            <person name="Lindeberg M."/>
            <person name="Birch P.R."/>
            <person name="Tsuyumu S."/>
            <person name="Shi X."/>
            <person name="Hibbing M."/>
            <person name="Yap M.N."/>
            <person name="Carpentier M."/>
            <person name="Dassa E."/>
            <person name="Umehara M."/>
            <person name="Kim J.F."/>
            <person name="Rusch M."/>
            <person name="Soni P."/>
            <person name="Mayhew G.F."/>
            <person name="Fouts D.E."/>
            <person name="Gill S.R."/>
            <person name="Blattner F.R."/>
            <person name="Keen N.T."/>
            <person name="Perna N.T."/>
        </authorList>
    </citation>
    <scope>NUCLEOTIDE SEQUENCE [LARGE SCALE GENOMIC DNA]</scope>
    <source>
        <strain>3937</strain>
    </source>
</reference>
<reference key="2">
    <citation type="journal article" date="2013" name="Proc. Natl. Acad. Sci. U.S.A.">
        <title>Rhs proteins from diverse bacteria mediate intercellular competition.</title>
        <authorList>
            <person name="Koskiniemi S."/>
            <person name="Lamoureux J.G."/>
            <person name="Nikolakakis K.C."/>
            <person name="t'Kint de Roodenbeke C."/>
            <person name="Kaplan M.D."/>
            <person name="Low D.A."/>
            <person name="Hayes C.S."/>
        </authorList>
    </citation>
    <scope>FUNCTION AS AN IMMUNITY PROTEIN</scope>
    <scope>EXPRESSION IN E.COLI</scope>
    <scope>DISRUPTION PHENOTYPE</scope>
    <source>
        <strain>3937</strain>
    </source>
</reference>
<name>RHSIC_DICD3</name>
<feature type="chain" id="PRO_0000423981" description="Immunity protein RhsIC">
    <location>
        <begin position="1"/>
        <end position="140"/>
    </location>
</feature>
<keyword id="KW-1185">Reference proteome</keyword>
<proteinExistence type="evidence at protein level"/>
<evidence type="ECO:0000269" key="1">
    <source>
    </source>
</evidence>
<dbReference type="EMBL" id="CP002038">
    <property type="protein sequence ID" value="ADM97667.1"/>
    <property type="molecule type" value="Genomic_DNA"/>
</dbReference>
<dbReference type="RefSeq" id="WP_013317128.1">
    <property type="nucleotide sequence ID" value="NC_014500.1"/>
</dbReference>
<dbReference type="STRING" id="198628.Dda3937_00826"/>
<dbReference type="KEGG" id="ddd:Dda3937_00826"/>
<dbReference type="eggNOG" id="ENOG502ZJWN">
    <property type="taxonomic scope" value="Bacteria"/>
</dbReference>
<dbReference type="HOGENOM" id="CLU_1822431_0_0_6"/>
<dbReference type="OrthoDB" id="6637505at2"/>
<dbReference type="Proteomes" id="UP000006859">
    <property type="component" value="Chromosome"/>
</dbReference>
<accession>E0SGL8</accession>
<protein>
    <recommendedName>
        <fullName>Immunity protein RhsIC</fullName>
    </recommendedName>
</protein>
<comment type="function">
    <text evidence="1">Putative immunity protein component of a toxin-immunity protein module, which may function as a cellular contact-dependent growth inhibition (CDI) system. Blocks the toxic effects of expression of the C-terminus (residues 1519-1658) of cognate toxin RhsC in E.coli.</text>
</comment>
<comment type="disruption phenotype">
    <text evidence="1">A double rhsC-rhsIC deletion is not outcompeted by wild-type cells.</text>
</comment>
<organism>
    <name type="scientific">Dickeya dadantii (strain 3937)</name>
    <name type="common">Erwinia chrysanthemi (strain 3937)</name>
    <dbReference type="NCBI Taxonomy" id="198628"/>
    <lineage>
        <taxon>Bacteria</taxon>
        <taxon>Pseudomonadati</taxon>
        <taxon>Pseudomonadota</taxon>
        <taxon>Gammaproteobacteria</taxon>
        <taxon>Enterobacterales</taxon>
        <taxon>Pectobacteriaceae</taxon>
        <taxon>Dickeya</taxon>
    </lineage>
</organism>